<evidence type="ECO:0000269" key="1">
    <source>
    </source>
</evidence>
<evidence type="ECO:0000305" key="2"/>
<comment type="function">
    <text evidence="1">Plays a role in the reorganization of host microtubules and intermediate filaments to form a cytoskeletal cage that surrounds the viral factories, protecting the site of viral replication. May play a role in viral infection of human cortical neurons.</text>
</comment>
<comment type="subcellular location">
    <subcellularLocation>
        <location evidence="1">Host cytoplasm</location>
    </subcellularLocation>
    <subcellularLocation>
        <location evidence="1">Host cytoplasm</location>
        <location evidence="1">Host cytoskeleton</location>
    </subcellularLocation>
</comment>
<comment type="alternative products">
    <event type="alternative initiation"/>
    <isoform>
        <id>P0DXO2-1</id>
        <name evidence="1">uORF1 protein</name>
        <sequence type="displayed"/>
    </isoform>
    <isoform>
        <id>A0A024B7W1-1</id>
        <name>Genome polyprotein</name>
        <sequence type="external"/>
    </isoform>
    <isoform>
        <id>P0DXO0-1</id>
        <name evidence="1">uORF2 protein</name>
        <sequence type="external"/>
    </isoform>
</comment>
<comment type="miscellaneous">
    <text evidence="1">Product of an upstream open reading frame of the genome polyprotein gene.</text>
</comment>
<comment type="miscellaneous">
    <text evidence="1">The initiator methionine is coded by an unusual start codon CTG.</text>
</comment>
<comment type="miscellaneous">
    <text evidence="2">Belongs to the Zika virus American lineage encoding for a two uORF.</text>
</comment>
<organism>
    <name type="scientific">Zika virus (isolate ZIKV/Human/French Polynesia/10087PF/2013)</name>
    <name type="common">ZIKV</name>
    <dbReference type="NCBI Taxonomy" id="2043570"/>
    <lineage>
        <taxon>Viruses</taxon>
        <taxon>Riboviria</taxon>
        <taxon>Orthornavirae</taxon>
        <taxon>Kitrinoviricota</taxon>
        <taxon>Flasuviricetes</taxon>
        <taxon>Amarillovirales</taxon>
        <taxon>Flaviviridae</taxon>
        <taxon>Orthoflavivirus</taxon>
        <taxon>Orthoflavivirus zikaense</taxon>
    </lineage>
</organism>
<name>ORF1_ZIKVF</name>
<accession>P0DXO2</accession>
<organismHost>
    <name type="scientific">Aedes aegypti</name>
    <name type="common">Yellowfever mosquito</name>
    <name type="synonym">Culex aegypti</name>
    <dbReference type="NCBI Taxonomy" id="7159"/>
</organismHost>
<organismHost>
    <name type="scientific">Aedes albopictus</name>
    <name type="common">Asian tiger mosquito</name>
    <name type="synonym">Stegomyia albopicta</name>
    <dbReference type="NCBI Taxonomy" id="7160"/>
</organismHost>
<organismHost>
    <name type="scientific">Homo sapiens</name>
    <name type="common">Human</name>
    <dbReference type="NCBI Taxonomy" id="9606"/>
</organismHost>
<organismHost>
    <name type="scientific">Macaca mulatta</name>
    <name type="common">Rhesus macaque</name>
    <dbReference type="NCBI Taxonomy" id="9544"/>
</organismHost>
<proteinExistence type="evidence at protein level"/>
<sequence>MRQFEFEAKASNSINRFYFGFGNESFWS</sequence>
<dbReference type="EMBL" id="KJ776791">
    <property type="status" value="NOT_ANNOTATED_CDS"/>
    <property type="molecule type" value="Genomic_RNA"/>
</dbReference>
<dbReference type="Proteomes" id="UP000151151">
    <property type="component" value="Segment"/>
</dbReference>
<dbReference type="GO" id="GO:0030430">
    <property type="term" value="C:host cell cytoplasm"/>
    <property type="evidence" value="ECO:0007669"/>
    <property type="project" value="UniProtKB-SubCell"/>
</dbReference>
<dbReference type="GO" id="GO:0044163">
    <property type="term" value="C:host cytoskeleton"/>
    <property type="evidence" value="ECO:0007669"/>
    <property type="project" value="UniProtKB-SubCell"/>
</dbReference>
<feature type="chain" id="PRO_0000461827" description="uORF1 protein">
    <location>
        <begin position="1"/>
        <end position="28"/>
    </location>
</feature>
<feature type="mutagenesis site" description="Complete loss of granular structures in the cytoplasm." evidence="1">
    <original>I</original>
    <variation>P</variation>
    <location>
        <position position="14"/>
    </location>
</feature>
<keyword id="KW-0024">Alternative initiation</keyword>
<keyword id="KW-1035">Host cytoplasm</keyword>
<keyword id="KW-1037">Host cytoskeleton</keyword>
<protein>
    <recommendedName>
        <fullName>uORF1 protein</fullName>
    </recommendedName>
</protein>
<reference key="1">
    <citation type="journal article" date="2014" name="Genome Announc.">
        <title>Complete coding sequence of zika virus from a French polynesia outbreak in 2013.</title>
        <authorList>
            <person name="Baronti C."/>
            <person name="Piorkowski G."/>
            <person name="Charrel R.N."/>
            <person name="Boubis L."/>
            <person name="Leparc-Goffart I."/>
            <person name="de Lamballerie X."/>
        </authorList>
    </citation>
    <scope>NUCLEOTIDE SEQUENCE [LARGE SCALE GENOMIC DNA]</scope>
</reference>
<reference key="2">
    <citation type="journal article" date="2024" name="Nat. Commun.">
        <title>Zika viruses encode 5' upstream open reading frames affecting infection of human brain cells.</title>
        <authorList>
            <person name="Lefevre C."/>
            <person name="Cook G.M."/>
            <person name="Dinan A.M."/>
            <person name="Torii S."/>
            <person name="Stewart H."/>
            <person name="Gibbons G."/>
            <person name="Nicholson A.S."/>
            <person name="Echavarria-Consuegra L."/>
            <person name="Meredith L.W."/>
            <person name="Lulla V."/>
            <person name="McGovern N."/>
            <person name="Kenyon J.C."/>
            <person name="Goodfellow I."/>
            <person name="Deane J.E."/>
            <person name="Graham S.C."/>
            <person name="Lakatos A."/>
            <person name="Lambrechts L."/>
            <person name="Brierley I."/>
            <person name="Irigoyen N."/>
        </authorList>
    </citation>
    <scope>ALTERNATIVE INITIATION (ISOFORM UROF1 AND UORF2)</scope>
    <scope>FUNCTION</scope>
    <scope>SUBCELLULAR LOCATION</scope>
    <scope>MUTAGENESIS OF ILE-14</scope>
    <source>
        <strain>Isolate PE243</strain>
    </source>
</reference>